<protein>
    <recommendedName>
        <fullName evidence="17 18 19 20">Organic anion transporter 3</fullName>
        <shortName evidence="18 19">Oat3</shortName>
    </recommendedName>
    <alternativeName>
        <fullName>Organic anion/dicarboxylate exchanger</fullName>
    </alternativeName>
    <alternativeName>
        <fullName>Solute carrier family 22 member 8</fullName>
    </alternativeName>
</protein>
<accession>Q9R1U7</accession>
<accession>Q66HN0</accession>
<keyword id="KW-1003">Cell membrane</keyword>
<keyword id="KW-0216">Detoxification</keyword>
<keyword id="KW-0325">Glycoprotein</keyword>
<keyword id="KW-0406">Ion transport</keyword>
<keyword id="KW-0445">Lipid transport</keyword>
<keyword id="KW-0472">Membrane</keyword>
<keyword id="KW-0597">Phosphoprotein</keyword>
<keyword id="KW-1185">Reference proteome</keyword>
<keyword id="KW-0812">Transmembrane</keyword>
<keyword id="KW-1133">Transmembrane helix</keyword>
<keyword id="KW-0813">Transport</keyword>
<sequence length="536" mass="59186">MTFSEILDRVGSMGPFQYLHVTLLALPVLGIANHNLLQIFTATTPVHHCRPPPNASIGPWVLPLDPNGKPEKCLRFVHLPNASLPNDTQRATEPCLDGWIYNSTRDTIVIEWDLVCSSNKLKEMAQSIFMAGILVGGPVIGELSDRFGRKPILTWSYLMLAASGSGAAFSPSLPVYMIFRFLCGCSISGISLSTVILNVEWVPTSMRAISSTSIGYCYTIGQFILSGLAYAIPQWRWLQLTSSAPFFIFSLLSWWVPESIRWLVLSGKYSKALKTLQRVATFNGKKEEGKKLTIEELKFNLQKDITSAKVKYGLSDLFRVSILRRVTFCLSLAWFSTGFAYYSLAMGVEEFGVNIYILQIIFGGVDIPAKFITILSLSYLGRRITQSFLLLLAGGAILALIFVPSEMQLLRTALAVFGKGCLSGSFSCLFLYTSELYPTVLRQTGMGISNVWARVGSMIAPLVKITGELQPFIPNVIFGTTALLGGSAAFFLLETLNRPLPETIEDIQNWHKQVQKTKQESEAEKASQIIPLKTGG</sequence>
<comment type="function">
    <text evidence="1 2 5 6 7 8 9 10 11 12 13 14 15 16 21">Functions as an organic anion/dicarboxylate exchanger that couples organic anion uptake indirectly to the sodium gradient (PubMed:12488248, PubMed:12660303). Transports organic anions such as estrone 3-sulfate (E1S) and urate in exchange for dicarboxylates such as glutarate or ketoglutarate (2-oxoglutarate) (PubMed:12488248, PubMed:12660303, PubMed:23832370). Plays an important role in the excretion of endogenous and exogenous organic anions, especially from the kidney and the brain (PubMed:10224140, PubMed:11961115, PubMed:12684544). E1S transport is pH- and chloride-dependent and may also involve E1S/cGMP exchange (By similarity). Responsible for the transport of prostaglandin E2 (PGE2) and prostaglandin F2(alpha) (PGF2(alpha)) in the basolateral side of the renal tubule (By similarity). Involved in the transport of neuroactive tryptophan metabolites kynurenate and xanthurenate (PubMed:23832370). Functions as a biopterin transporters involved in the uptake and the secretion of coenzymes tetrahydrobiopterin (BH4), dihydrobiopterin (BH2) and sepiapterin to urine, thereby determining baseline levels of blood biopterins (By similarity). May be involved in the basolateral transport of steviol, a metabolite of the popular sugar substitute stevioside (By similarity). May participate in the detoxification/ renal excretion of drugs and xenobiotics, such as the histamine H(2)-receptor antagonists fexofenadine and cimetidine, the antibiotic benzylpenicillin (PCG), the anionic herbicide 2,4-dichloro-phenoxyacetate (2,4-D), the diagnostic agent p-aminohippurate (PAH), the antiviral acyclovir (ACV), and the mycotoxin ochratoxin (OTA), by transporting these exogenous organic anions across the cell membrane in exchange for dicarboxylates such as 2-oxoglutarate (By similarity). Contributes to the renal uptake of potent uremic toxins (indoxyl sulfate (IS), indole acetate (IA), hippurate/N-benzoylglycine (HA) and 3-carboxy-4-methyl-5-propyl-2-furanpropionate (CMPF)), pravastatin, PCG, E1S and dehydroepiandrosterone sulfate (DHEAS), and is partly involved in the renal uptake of temocaprilat (an angiotensin-converting enzyme (ACE) inhibitor) (PubMed:11861777, PubMed:12660303, PubMed:14675047, PubMed:15846470). May contribute to the release of cortisol in the adrenals (By similarity). Involved in one of the detoxification systems on the choroid plexus (CP), removes substrates such as E1S or taurocholate (TC), PCG, 2,4-D and PAH, from the cerebrospinal fluid (CSF) to the blood for eventual excretion in urine and bile (PubMed:11961115, PubMed:15319347, PubMed:15389674). Regulates the CSF concentration of histamine H(2)-receptor antagonists cimetidine and ranitidine at the CP (PubMed:15319347). Also contributes to the uptake of several other organic compounds such as the prostanoids prostaglandin E(2) and prostaglandin F(2-alpha), L-carnitine, and the therapeutic drugs allopurinol, 6-mercaptopurine (6-MP) and 5-fluorouracil (5-FU) (By similarity). Mediates the uptake from brain of organic anions, such as E1S, PAH, and OTA (PubMed:10224140, PubMed:11961115). Mediates the transport of PAH, PCG, and the statins pravastatin and pitavastatin, from the cerebrum into the blood circulation across the blood-brain barrier (BBB) (PubMed:11961115, PubMed:12684544, PubMed:15292460). In summary, plays a role in the efflux of drugs and xenobiotics, helping reduce their undesired toxicological effects on the body (PubMed:15292460).</text>
</comment>
<comment type="catalytic activity">
    <reaction evidence="8 23 24">
        <text>estrone 3-sulfate(out) + glutarate(in) = estrone 3-sulfate(in) + glutarate(out)</text>
        <dbReference type="Rhea" id="RHEA:72151"/>
        <dbReference type="ChEBI" id="CHEBI:30921"/>
        <dbReference type="ChEBI" id="CHEBI:60050"/>
    </reaction>
</comment>
<comment type="catalytic activity">
    <reaction evidence="2">
        <text>estrone 3-sulfate(in) + 2-oxoglutarate(out) = estrone 3-sulfate(out) + 2-oxoglutarate(in)</text>
        <dbReference type="Rhea" id="RHEA:72399"/>
        <dbReference type="ChEBI" id="CHEBI:16810"/>
        <dbReference type="ChEBI" id="CHEBI:60050"/>
    </reaction>
</comment>
<comment type="catalytic activity">
    <reaction evidence="2">
        <text>glutarate(in) + 2-oxoglutarate(out) = glutarate(out) + 2-oxoglutarate(in)</text>
        <dbReference type="Rhea" id="RHEA:71751"/>
        <dbReference type="ChEBI" id="CHEBI:16810"/>
        <dbReference type="ChEBI" id="CHEBI:30921"/>
    </reaction>
</comment>
<comment type="catalytic activity">
    <reaction evidence="2">
        <text>urate(in) + 2-oxoglutarate(out) = urate(out) + 2-oxoglutarate(in)</text>
        <dbReference type="Rhea" id="RHEA:72403"/>
        <dbReference type="ChEBI" id="CHEBI:16810"/>
        <dbReference type="ChEBI" id="CHEBI:17775"/>
    </reaction>
</comment>
<comment type="catalytic activity">
    <reaction evidence="1">
        <text>taurocholate(out) + glutarate(in) = taurocholate(in) + glutarate(out)</text>
        <dbReference type="Rhea" id="RHEA:72159"/>
        <dbReference type="ChEBI" id="CHEBI:30921"/>
        <dbReference type="ChEBI" id="CHEBI:36257"/>
    </reaction>
</comment>
<comment type="catalytic activity">
    <reaction evidence="1">
        <text>dehydroepiandrosterone 3-sulfate(out) + glutarate(in) = dehydroepiandrosterone 3-sulfate(in) + glutarate(out)</text>
        <dbReference type="Rhea" id="RHEA:72355"/>
        <dbReference type="ChEBI" id="CHEBI:30921"/>
        <dbReference type="ChEBI" id="CHEBI:57905"/>
    </reaction>
</comment>
<comment type="catalytic activity">
    <reaction evidence="1">
        <text>prostaglandin F2alpha(out) + glutarate(in) = prostaglandin F2alpha(in) + glutarate(out)</text>
        <dbReference type="Rhea" id="RHEA:72503"/>
        <dbReference type="ChEBI" id="CHEBI:30921"/>
        <dbReference type="ChEBI" id="CHEBI:57404"/>
    </reaction>
</comment>
<comment type="catalytic activity">
    <reaction evidence="1">
        <text>prostaglandin F2alpha(out) + 2-oxoglutarate(in) = prostaglandin F2alpha(in) + 2-oxoglutarate(out)</text>
        <dbReference type="Rhea" id="RHEA:72507"/>
        <dbReference type="ChEBI" id="CHEBI:16810"/>
        <dbReference type="ChEBI" id="CHEBI:57404"/>
    </reaction>
</comment>
<comment type="catalytic activity">
    <reaction evidence="1">
        <text>(R)-carnitine(out) + 2-oxoglutarate(in) = (R)-carnitine(in) + 2-oxoglutarate(out)</text>
        <dbReference type="Rhea" id="RHEA:72511"/>
        <dbReference type="ChEBI" id="CHEBI:16347"/>
        <dbReference type="ChEBI" id="CHEBI:16810"/>
    </reaction>
</comment>
<comment type="catalytic activity">
    <reaction evidence="1">
        <text>glutarate(in) + (R)-carnitine(out) = glutarate(out) + (R)-carnitine(in)</text>
        <dbReference type="Rhea" id="RHEA:72515"/>
        <dbReference type="ChEBI" id="CHEBI:16347"/>
        <dbReference type="ChEBI" id="CHEBI:30921"/>
    </reaction>
</comment>
<comment type="catalytic activity">
    <reaction evidence="1">
        <text>prostaglandin E2(out) + 2-oxoglutarate(in) = prostaglandin E2(in) + 2-oxoglutarate(out)</text>
        <dbReference type="Rhea" id="RHEA:72499"/>
        <dbReference type="ChEBI" id="CHEBI:16810"/>
        <dbReference type="ChEBI" id="CHEBI:606564"/>
    </reaction>
</comment>
<comment type="catalytic activity">
    <reaction evidence="1">
        <text>prostaglandin E2(out) + glutarate(in) = prostaglandin E2(in) + glutarate(out)</text>
        <dbReference type="Rhea" id="RHEA:72495"/>
        <dbReference type="ChEBI" id="CHEBI:30921"/>
        <dbReference type="ChEBI" id="CHEBI:606564"/>
    </reaction>
</comment>
<comment type="catalytic activity">
    <reaction evidence="2">
        <text>urate(in) + glutarate(out) = urate(out) + glutarate(in)</text>
        <dbReference type="Rhea" id="RHEA:72551"/>
        <dbReference type="ChEBI" id="CHEBI:17775"/>
        <dbReference type="ChEBI" id="CHEBI:30921"/>
    </reaction>
</comment>
<comment type="catalytic activity">
    <reaction evidence="1">
        <text>taurocholate(out) + 2-oxoglutarate(in) = taurocholate(in) + 2-oxoglutarate(out)</text>
        <dbReference type="Rhea" id="RHEA:72547"/>
        <dbReference type="ChEBI" id="CHEBI:16810"/>
        <dbReference type="ChEBI" id="CHEBI:36257"/>
    </reaction>
</comment>
<comment type="catalytic activity">
    <reaction evidence="1">
        <text>dehydroepiandrosterone 3-sulfate(out) + 2-oxoglutarate(in) = dehydroepiandrosterone 3-sulfate(in) + 2-oxoglutarate(out)</text>
        <dbReference type="Rhea" id="RHEA:72543"/>
        <dbReference type="ChEBI" id="CHEBI:16810"/>
        <dbReference type="ChEBI" id="CHEBI:57905"/>
    </reaction>
</comment>
<comment type="catalytic activity">
    <reaction evidence="16">
        <text>kynurenate(out) + a dicarboxylate(in) = kynurenate(in) + a dicarboxylate(out)</text>
        <dbReference type="Rhea" id="RHEA:76087"/>
        <dbReference type="ChEBI" id="CHEBI:28965"/>
        <dbReference type="ChEBI" id="CHEBI:58454"/>
    </reaction>
</comment>
<comment type="catalytic activity">
    <reaction evidence="11">
        <text>(indol-3-yl)acetate(out) + a dicarboxylate(in) = (indol-3-yl)acetate(in) + a dicarboxylate(out)</text>
        <dbReference type="Rhea" id="RHEA:75983"/>
        <dbReference type="ChEBI" id="CHEBI:28965"/>
        <dbReference type="ChEBI" id="CHEBI:30854"/>
    </reaction>
</comment>
<comment type="catalytic activity">
    <reaction evidence="11">
        <text>indoxyl sulfate(out) + a dicarboxylate(in) = indoxyl sulfate(in) + a dicarboxylate(out)</text>
        <dbReference type="Rhea" id="RHEA:75987"/>
        <dbReference type="ChEBI" id="CHEBI:28965"/>
        <dbReference type="ChEBI" id="CHEBI:144643"/>
    </reaction>
</comment>
<comment type="catalytic activity">
    <reaction evidence="11">
        <text>N-benzoylglycine(out) + a dicarboxylate(in) = N-benzoylglycine(in) + a dicarboxylate(out)</text>
        <dbReference type="Rhea" id="RHEA:75991"/>
        <dbReference type="ChEBI" id="CHEBI:28965"/>
        <dbReference type="ChEBI" id="CHEBI:606565"/>
    </reaction>
</comment>
<comment type="catalytic activity">
    <reaction evidence="11">
        <text>3-carboxy-4-methyl-5-propyl-2-furanpropanoate(out) + a dicarboxylate(in) = 3-carboxy-4-methyl-5-propyl-2-furanpropanoate(in) + a dicarboxylate(out)</text>
        <dbReference type="Rhea" id="RHEA:75995"/>
        <dbReference type="ChEBI" id="CHEBI:28965"/>
        <dbReference type="ChEBI" id="CHEBI:194524"/>
    </reaction>
</comment>
<comment type="catalytic activity">
    <reaction evidence="2">
        <text>(6R)-L-erythro-5,6,7,8-tetrahydrobiopterin(out) + a dicarboxylate(in) = (6R)-L-erythro-5,6,7,8-tetrahydrobiopterin(in) + a dicarboxylate(out)</text>
        <dbReference type="Rhea" id="RHEA:76071"/>
        <dbReference type="ChEBI" id="CHEBI:28965"/>
        <dbReference type="ChEBI" id="CHEBI:59560"/>
    </reaction>
</comment>
<comment type="catalytic activity">
    <reaction evidence="2">
        <text>L-erythro-7,8-dihydrobiopterin(out) + a dicarboxylate(in) = L-erythro-7,8-dihydrobiopterin(in) + a dicarboxylate(out)</text>
        <dbReference type="Rhea" id="RHEA:76075"/>
        <dbReference type="ChEBI" id="CHEBI:28965"/>
        <dbReference type="ChEBI" id="CHEBI:43029"/>
    </reaction>
</comment>
<comment type="catalytic activity">
    <reaction evidence="2">
        <text>L-sepiapterin(out) + a dicarboxylate(in) = L-sepiapterin(in) + a dicarboxylate(out)</text>
        <dbReference type="Rhea" id="RHEA:76079"/>
        <dbReference type="ChEBI" id="CHEBI:28965"/>
        <dbReference type="ChEBI" id="CHEBI:194527"/>
    </reaction>
</comment>
<comment type="biophysicochemical properties">
    <kinetics>
        <KM evidence="5">2.3 uM for estrone 3-sulfate</KM>
        <KM evidence="9">5.3 uM for estrone 3-sulfate</KM>
        <KM evidence="9">12 uM for dehydroepiandrosterone sulfate</KM>
        <KM evidence="12">18.2 uM for pravastatin</KM>
        <KM evidence="12">4.85 uM for pitavastatin</KM>
        <KM evidence="13">80 uM for cimetidine</KM>
        <KM evidence="13">120 uM for ranitidine</KM>
        <KM evidence="14">20 uM for 2,4-dichlorophenoxyacetate</KM>
        <KM evidence="11">174 uM for indoxyl sulfate</KM>
        <KM evidence="11">10.9 uM for 3-carboxy-4- methyl-5-propyl-2-furanpropionate</KM>
        <KM evidence="16">6.87 uM for xanthurenate</KM>
        <Vmax evidence="11">1047.0 pmol/min/mg enzyme for indoxyl sulfate uptake</Vmax>
        <Vmax evidence="11">66.4 pmol/min/mg enzyme for 3-carboxy-4- methyl-5-propyl-2-furanpropionate uptake</Vmax>
    </kinetics>
</comment>
<comment type="subcellular location">
    <subcellularLocation>
        <location evidence="14">Basolateral cell membrane</location>
        <topology evidence="22">Multi-pass membrane protein</topology>
    </subcellularLocation>
    <text evidence="6 7 10">Localizes on the brush border membrane of the choroid epithelial cells. Localizes to the basolateral membrane of the proximal tubular cells. Localizes on the abluminal and possibly, luminal membrane of the brain capillary endothelial cells (BCEC).</text>
</comment>
<comment type="tissue specificity">
    <text evidence="5 6 7 10">Expressed in the liver, brain, kidney, choroid plexus and weakly in the eye (PubMed:10224140, PubMed:11861777, PubMed:11961115). Moderately expressed (at protein level) in the brain capillary endothelial cells (BCEC) (PubMed:12684544).</text>
</comment>
<comment type="similarity">
    <text evidence="22">Belongs to the major facilitator (TC 2.A.1) superfamily. Organic cation transporter (TC 2.A.1.19) family.</text>
</comment>
<proteinExistence type="evidence at protein level"/>
<name>S22A8_RAT</name>
<reference key="1">
    <citation type="journal article" date="1999" name="J. Biol. Chem.">
        <title>Molecular cloning and characterization of a new multispecific organic anion transporter from rat brain.</title>
        <authorList>
            <person name="Kusuhara H."/>
            <person name="Sekine T."/>
            <person name="Utsunomiya-Tate N."/>
            <person name="Tsuda M."/>
            <person name="Kojima R."/>
            <person name="Cha S.H."/>
            <person name="Sugiyama Y."/>
            <person name="Kanai Y."/>
            <person name="Endou H."/>
        </authorList>
    </citation>
    <scope>NUCLEOTIDE SEQUENCE [MRNA]</scope>
    <scope>FUNCTION</scope>
    <scope>TISSUE SPECIFICITY</scope>
    <scope>BIOPHYSICOCHEMICAL PROPERTIES</scope>
    <scope>TRANSPORTER ACTIVITY</scope>
    <source>
        <strain>Sprague-Dawley</strain>
        <tissue>Brain</tissue>
    </source>
</reference>
<reference key="2">
    <citation type="journal article" date="2004" name="Genome Res.">
        <title>The status, quality, and expansion of the NIH full-length cDNA project: the Mammalian Gene Collection (MGC).</title>
        <authorList>
            <consortium name="The MGC Project Team"/>
        </authorList>
    </citation>
    <scope>NUCLEOTIDE SEQUENCE [LARGE SCALE MRNA]</scope>
    <source>
        <tissue>Kidney</tissue>
    </source>
</reference>
<reference key="3">
    <citation type="journal article" date="2002" name="Mol. Pharmacol.">
        <title>Expression and functional characterization of rat organic anion transporter 3 (rOat3) in the choroid plexus.</title>
        <authorList>
            <person name="Nagata Y."/>
            <person name="Kusuhara H."/>
            <person name="Endou H."/>
            <person name="Sugiyama Y."/>
        </authorList>
    </citation>
    <scope>FUNCTION</scope>
    <scope>TISSUE SPECIFICITY</scope>
    <scope>SUBCELLULAR LOCATION</scope>
</reference>
<reference key="4">
    <citation type="journal article" date="2002" name="J. Pharmacol. Exp. Ther.">
        <title>Functional involvement of rat organic anion transporter 3 (rOat3; Slc22a8) in the renal uptake of organic anions.</title>
        <authorList>
            <person name="Hasegawa M."/>
            <person name="Kusuhara H."/>
            <person name="Sugiyama D."/>
            <person name="Ito K."/>
            <person name="Ueda S."/>
            <person name="Endou H."/>
            <person name="Sugiyama Y."/>
        </authorList>
    </citation>
    <scope>FUNCTION</scope>
    <scope>SUBCELLULAR LOCATION</scope>
    <scope>TISSUE SPECIFICITY</scope>
</reference>
<reference key="5">
    <citation type="journal article" date="2003" name="J. Pharmacol. Exp. Ther.">
        <title>Contribution of organic anion transporters to the renal uptake of anionic compounds and nucleoside derivatives in rat.</title>
        <authorList>
            <person name="Hasegawa M."/>
            <person name="Kusuhara H."/>
            <person name="Endou H."/>
            <person name="Sugiyama Y."/>
        </authorList>
    </citation>
    <scope>FUNCTION</scope>
    <scope>BIOPHYSICOCHEMICAL PROPERTIES</scope>
    <scope>TRANSPORTER ACTIVITY</scope>
</reference>
<reference key="6">
    <citation type="journal article" date="2003" name="J. Pharmacol. Exp. Ther.">
        <title>Contribution of organic anion transporter 3 (Slc22a8) to the elimination of p-aminohippuric acid and benzylpenicillin across the blood-brain barrier.</title>
        <authorList>
            <person name="Kikuchi R."/>
            <person name="Kusuhara H."/>
            <person name="Sugiyama D."/>
            <person name="Sugiyama Y."/>
        </authorList>
    </citation>
    <scope>FUNCTION</scope>
    <scope>SUBCELLULAR LOCATION</scope>
    <scope>TISSUE SPECIFICITY</scope>
</reference>
<reference key="7">
    <citation type="journal article" date="2003" name="Am. J. Physiol.">
        <title>Organic anion transporter 3 (Slc22a8) is a dicarboxylate exchanger indirectly coupled to the Na+ gradient.</title>
        <authorList>
            <person name="Sweet D.H."/>
            <person name="Chan L.M."/>
            <person name="Walden R."/>
            <person name="Yang X.-P."/>
            <person name="Miller D.S."/>
            <person name="Pritchard J.B."/>
        </authorList>
    </citation>
    <scope>FUNCTION</scope>
    <scope>TRANSPORTER ACTIVITY</scope>
</reference>
<reference key="8">
    <citation type="journal article" date="2004" name="J. Pharmacol. Exp. Ther.">
        <title>Involvement of multiple transporters in the efflux of 3-hydroxy-3-methylglutaryl-CoA reductase inhibitors across the blood-brain barrier.</title>
        <authorList>
            <person name="Kikuchi R."/>
            <person name="Kusuhara H."/>
            <person name="Abe T."/>
            <person name="Endou H."/>
            <person name="Sugiyama Y."/>
        </authorList>
    </citation>
    <scope>FUNCTION</scope>
    <scope>BIOPHYSICOCHEMICAL PROPERTIES</scope>
</reference>
<reference key="9">
    <citation type="journal article" date="2004" name="Drug Metab. Dispos.">
        <title>Carrier-mediated uptake of H2-receptor antagonists by the rat choroid plexus: involvement of rat organic anion transporter 3.</title>
        <authorList>
            <person name="Nagata Y."/>
            <person name="Kusuhara H."/>
            <person name="Hirono S."/>
            <person name="Endou H."/>
            <person name="Sugiyama Y."/>
        </authorList>
    </citation>
    <scope>FUNCTION</scope>
    <scope>BIOPHYSICOCHEMICAL PROPERTIES</scope>
</reference>
<reference key="10">
    <citation type="journal article" date="2004" name="J. Pharm. Sci.">
        <title>Involvement of rat organic anion transporter 3 in the uptake of an organic herbicide, 2,4-dichlorophenoxyacetate, by the isolated rat choroid plexus.</title>
        <authorList>
            <person name="Nagata Y."/>
            <person name="Kusuhara H."/>
            <person name="Imaoka T."/>
            <person name="Endou H."/>
            <person name="Sugiyama Y."/>
        </authorList>
    </citation>
    <scope>FUNCTION</scope>
    <scope>BIOPHYSICOCHEMICAL PROPERTIES</scope>
    <scope>SUBCELLULAR LOCATION</scope>
</reference>
<reference key="11">
    <citation type="journal article" date="2004" name="Kidney Int.">
        <title>Characterization of uremic toxin transport by organic anion transporters in the kidney.</title>
        <authorList>
            <person name="Deguchi T."/>
            <person name="Kusuhara H."/>
            <person name="Takadate A."/>
            <person name="Endou H."/>
            <person name="Otagiri M."/>
            <person name="Sugiyama Y."/>
        </authorList>
    </citation>
    <scope>FUNCTION</scope>
    <scope>TRANSPORTER ACTIVITY</scope>
    <scope>BIOPHYSICOCHEMICAL PROPERTIES</scope>
</reference>
<reference key="12">
    <citation type="journal article" date="2005" name="Pharm. Res.">
        <title>Differential contributions of rOat1 (Slc22a6) and rOat3 (Slc22a8) to the in vivo renal uptake of uremic toxins in rats.</title>
        <authorList>
            <person name="Deguchi T."/>
            <person name="Kouno Y."/>
            <person name="Terasaki T."/>
            <person name="Takadate A."/>
            <person name="Otagiri M."/>
        </authorList>
    </citation>
    <scope>FUNCTION</scope>
</reference>
<reference key="13">
    <citation type="journal article" date="2012" name="Nat. Commun.">
        <title>Quantitative maps of protein phosphorylation sites across 14 different rat organs and tissues.</title>
        <authorList>
            <person name="Lundby A."/>
            <person name="Secher A."/>
            <person name="Lage K."/>
            <person name="Nordsborg N.B."/>
            <person name="Dmytriyev A."/>
            <person name="Lundby C."/>
            <person name="Olsen J.V."/>
        </authorList>
    </citation>
    <scope>PHOSPHORYLATION [LARGE SCALE ANALYSIS] AT SER-4</scope>
    <scope>IDENTIFICATION BY MASS SPECTROMETRY [LARGE SCALE ANALYSIS]</scope>
</reference>
<reference key="14">
    <citation type="journal article" date="2013" name="Biosci. Biotechnol. Biochem.">
        <title>Transport of xanthurenic acid by rat/human organic anion transporters OAT1 and OAT3.</title>
        <authorList>
            <person name="Uwai Y."/>
            <person name="Honjo E."/>
        </authorList>
    </citation>
    <scope>FUNCTION</scope>
    <scope>TRANSPORTER ACTIVITY</scope>
    <scope>BIOPHYSICOCHEMICAL PROPERTIES</scope>
</reference>
<evidence type="ECO:0000250" key="1">
    <source>
        <dbReference type="UniProtKB" id="O88909"/>
    </source>
</evidence>
<evidence type="ECO:0000250" key="2">
    <source>
        <dbReference type="UniProtKB" id="Q8TCC7"/>
    </source>
</evidence>
<evidence type="ECO:0000255" key="3"/>
<evidence type="ECO:0000256" key="4">
    <source>
        <dbReference type="SAM" id="MobiDB-lite"/>
    </source>
</evidence>
<evidence type="ECO:0000269" key="5">
    <source>
    </source>
</evidence>
<evidence type="ECO:0000269" key="6">
    <source>
    </source>
</evidence>
<evidence type="ECO:0000269" key="7">
    <source>
    </source>
</evidence>
<evidence type="ECO:0000269" key="8">
    <source>
    </source>
</evidence>
<evidence type="ECO:0000269" key="9">
    <source>
    </source>
</evidence>
<evidence type="ECO:0000269" key="10">
    <source>
    </source>
</evidence>
<evidence type="ECO:0000269" key="11">
    <source>
    </source>
</evidence>
<evidence type="ECO:0000269" key="12">
    <source>
    </source>
</evidence>
<evidence type="ECO:0000269" key="13">
    <source>
    </source>
</evidence>
<evidence type="ECO:0000269" key="14">
    <source>
    </source>
</evidence>
<evidence type="ECO:0000269" key="15">
    <source>
    </source>
</evidence>
<evidence type="ECO:0000269" key="16">
    <source>
    </source>
</evidence>
<evidence type="ECO:0000303" key="17">
    <source>
    </source>
</evidence>
<evidence type="ECO:0000303" key="18">
    <source>
    </source>
</evidence>
<evidence type="ECO:0000303" key="19">
    <source>
    </source>
</evidence>
<evidence type="ECO:0000303" key="20">
    <source>
    </source>
</evidence>
<evidence type="ECO:0000303" key="21">
    <source>
    </source>
</evidence>
<evidence type="ECO:0000305" key="22"/>
<evidence type="ECO:0000305" key="23">
    <source>
    </source>
</evidence>
<evidence type="ECO:0000305" key="24">
    <source>
    </source>
</evidence>
<evidence type="ECO:0007744" key="25">
    <source>
    </source>
</evidence>
<dbReference type="EMBL" id="AB017446">
    <property type="protein sequence ID" value="BAA82552.1"/>
    <property type="molecule type" value="mRNA"/>
</dbReference>
<dbReference type="EMBL" id="BC081777">
    <property type="protein sequence ID" value="AAH81777.1"/>
    <property type="molecule type" value="mRNA"/>
</dbReference>
<dbReference type="RefSeq" id="NP_112622.1">
    <property type="nucleotide sequence ID" value="NM_031332.1"/>
</dbReference>
<dbReference type="SMR" id="Q9R1U7"/>
<dbReference type="BioGRID" id="249719">
    <property type="interactions" value="1"/>
</dbReference>
<dbReference type="CORUM" id="Q9R1U7"/>
<dbReference type="FunCoup" id="Q9R1U7">
    <property type="interactions" value="6"/>
</dbReference>
<dbReference type="STRING" id="10116.ENSRNOP00000024488"/>
<dbReference type="BindingDB" id="Q9R1U7"/>
<dbReference type="ChEMBL" id="CHEMBL2073666"/>
<dbReference type="TCDB" id="2.A.1.19.7">
    <property type="family name" value="the major facilitator superfamily (mfs)"/>
</dbReference>
<dbReference type="GlyCosmos" id="Q9R1U7">
    <property type="glycosylation" value="2 sites, No reported glycans"/>
</dbReference>
<dbReference type="GlyGen" id="Q9R1U7">
    <property type="glycosylation" value="2 sites"/>
</dbReference>
<dbReference type="iPTMnet" id="Q9R1U7"/>
<dbReference type="PhosphoSitePlus" id="Q9R1U7"/>
<dbReference type="PaxDb" id="10116-ENSRNOP00000024488"/>
<dbReference type="GeneID" id="83500"/>
<dbReference type="KEGG" id="rno:83500"/>
<dbReference type="UCSC" id="RGD:632286">
    <property type="organism name" value="rat"/>
</dbReference>
<dbReference type="AGR" id="RGD:632286"/>
<dbReference type="CTD" id="9376"/>
<dbReference type="RGD" id="632286">
    <property type="gene designation" value="Slc22a8"/>
</dbReference>
<dbReference type="eggNOG" id="KOG0255">
    <property type="taxonomic scope" value="Eukaryota"/>
</dbReference>
<dbReference type="InParanoid" id="Q9R1U7"/>
<dbReference type="OrthoDB" id="51693at9989"/>
<dbReference type="PhylomeDB" id="Q9R1U7"/>
<dbReference type="TreeFam" id="TF315847"/>
<dbReference type="Reactome" id="R-RNO-561048">
    <property type="pathway name" value="Organic anion transport"/>
</dbReference>
<dbReference type="PRO" id="PR:Q9R1U7"/>
<dbReference type="Proteomes" id="UP000002494">
    <property type="component" value="Unplaced"/>
</dbReference>
<dbReference type="GO" id="GO:0016324">
    <property type="term" value="C:apical plasma membrane"/>
    <property type="evidence" value="ECO:0000314"/>
    <property type="project" value="ARUK-UCL"/>
</dbReference>
<dbReference type="GO" id="GO:0016323">
    <property type="term" value="C:basolateral plasma membrane"/>
    <property type="evidence" value="ECO:0000314"/>
    <property type="project" value="ARUK-UCL"/>
</dbReference>
<dbReference type="GO" id="GO:0015297">
    <property type="term" value="F:antiporter activity"/>
    <property type="evidence" value="ECO:0000250"/>
    <property type="project" value="UniProtKB"/>
</dbReference>
<dbReference type="GO" id="GO:0008514">
    <property type="term" value="F:organic anion transmembrane transporter activity"/>
    <property type="evidence" value="ECO:0000314"/>
    <property type="project" value="UniProtKB"/>
</dbReference>
<dbReference type="GO" id="GO:0015132">
    <property type="term" value="F:prostaglandin transmembrane transporter activity"/>
    <property type="evidence" value="ECO:0000266"/>
    <property type="project" value="RGD"/>
</dbReference>
<dbReference type="GO" id="GO:0005080">
    <property type="term" value="F:protein kinase C binding"/>
    <property type="evidence" value="ECO:0000353"/>
    <property type="project" value="RGD"/>
</dbReference>
<dbReference type="GO" id="GO:0015651">
    <property type="term" value="F:quaternary ammonium group transmembrane transporter activity"/>
    <property type="evidence" value="ECO:0000314"/>
    <property type="project" value="RGD"/>
</dbReference>
<dbReference type="GO" id="GO:0005452">
    <property type="term" value="F:solute:inorganic anion antiporter activity"/>
    <property type="evidence" value="ECO:0000266"/>
    <property type="project" value="RGD"/>
</dbReference>
<dbReference type="GO" id="GO:0042910">
    <property type="term" value="F:xenobiotic transmembrane transporter activity"/>
    <property type="evidence" value="ECO:0000250"/>
    <property type="project" value="UniProtKB"/>
</dbReference>
<dbReference type="GO" id="GO:0034635">
    <property type="term" value="P:glutathione transport"/>
    <property type="evidence" value="ECO:0000314"/>
    <property type="project" value="RGD"/>
</dbReference>
<dbReference type="GO" id="GO:0006811">
    <property type="term" value="P:monoatomic ion transport"/>
    <property type="evidence" value="ECO:0007669"/>
    <property type="project" value="UniProtKB-KW"/>
</dbReference>
<dbReference type="GO" id="GO:0015711">
    <property type="term" value="P:organic anion transport"/>
    <property type="evidence" value="ECO:0000318"/>
    <property type="project" value="GO_Central"/>
</dbReference>
<dbReference type="GO" id="GO:0015732">
    <property type="term" value="P:prostaglandin transport"/>
    <property type="evidence" value="ECO:0000250"/>
    <property type="project" value="UniProtKB"/>
</dbReference>
<dbReference type="GO" id="GO:0015697">
    <property type="term" value="P:quaternary ammonium group transport"/>
    <property type="evidence" value="ECO:0000314"/>
    <property type="project" value="RGD"/>
</dbReference>
<dbReference type="GO" id="GO:0009636">
    <property type="term" value="P:response to toxic substance"/>
    <property type="evidence" value="ECO:0007669"/>
    <property type="project" value="UniProtKB-KW"/>
</dbReference>
<dbReference type="FunFam" id="1.20.1250.20:FF:000023">
    <property type="entry name" value="Solute carrier family 22 member 6"/>
    <property type="match status" value="1"/>
</dbReference>
<dbReference type="Gene3D" id="1.20.1250.20">
    <property type="entry name" value="MFS general substrate transporter like domains"/>
    <property type="match status" value="1"/>
</dbReference>
<dbReference type="InterPro" id="IPR020846">
    <property type="entry name" value="MFS_dom"/>
</dbReference>
<dbReference type="InterPro" id="IPR005828">
    <property type="entry name" value="MFS_sugar_transport-like"/>
</dbReference>
<dbReference type="InterPro" id="IPR036259">
    <property type="entry name" value="MFS_trans_sf"/>
</dbReference>
<dbReference type="InterPro" id="IPR004749">
    <property type="entry name" value="Orgcat_transp/SVOP"/>
</dbReference>
<dbReference type="InterPro" id="IPR005829">
    <property type="entry name" value="Sugar_transporter_CS"/>
</dbReference>
<dbReference type="NCBIfam" id="TIGR00898">
    <property type="entry name" value="2A0119"/>
    <property type="match status" value="1"/>
</dbReference>
<dbReference type="PANTHER" id="PTHR24064">
    <property type="entry name" value="SOLUTE CARRIER FAMILY 22 MEMBER"/>
    <property type="match status" value="1"/>
</dbReference>
<dbReference type="Pfam" id="PF00083">
    <property type="entry name" value="Sugar_tr"/>
    <property type="match status" value="1"/>
</dbReference>
<dbReference type="SUPFAM" id="SSF103473">
    <property type="entry name" value="MFS general substrate transporter"/>
    <property type="match status" value="1"/>
</dbReference>
<dbReference type="PROSITE" id="PS50850">
    <property type="entry name" value="MFS"/>
    <property type="match status" value="1"/>
</dbReference>
<feature type="chain" id="PRO_0000273445" description="Organic anion transporter 3">
    <location>
        <begin position="1"/>
        <end position="536"/>
    </location>
</feature>
<feature type="topological domain" description="Cytoplasmic" evidence="3">
    <location>
        <begin position="1"/>
        <end position="11"/>
    </location>
</feature>
<feature type="transmembrane region" description="Helical" evidence="3">
    <location>
        <begin position="12"/>
        <end position="32"/>
    </location>
</feature>
<feature type="topological domain" description="Extracellular" evidence="3">
    <location>
        <begin position="33"/>
        <end position="123"/>
    </location>
</feature>
<feature type="transmembrane region" description="Helical" evidence="3">
    <location>
        <begin position="124"/>
        <end position="144"/>
    </location>
</feature>
<feature type="topological domain" description="Cytoplasmic" evidence="3">
    <location>
        <begin position="145"/>
        <end position="158"/>
    </location>
</feature>
<feature type="transmembrane region" description="Helical" evidence="3">
    <location>
        <begin position="159"/>
        <end position="179"/>
    </location>
</feature>
<feature type="topological domain" description="Extracellular" evidence="3">
    <location>
        <position position="180"/>
    </location>
</feature>
<feature type="transmembrane region" description="Helical" evidence="3">
    <location>
        <begin position="181"/>
        <end position="201"/>
    </location>
</feature>
<feature type="topological domain" description="Cytoplasmic" evidence="3">
    <location>
        <begin position="202"/>
        <end position="212"/>
    </location>
</feature>
<feature type="transmembrane region" description="Helical" evidence="3">
    <location>
        <begin position="213"/>
        <end position="233"/>
    </location>
</feature>
<feature type="topological domain" description="Extracellular" evidence="3">
    <location>
        <begin position="234"/>
        <end position="236"/>
    </location>
</feature>
<feature type="transmembrane region" description="Helical" evidence="3">
    <location>
        <begin position="237"/>
        <end position="257"/>
    </location>
</feature>
<feature type="topological domain" description="Cytoplasmic" evidence="3">
    <location>
        <begin position="258"/>
        <end position="327"/>
    </location>
</feature>
<feature type="transmembrane region" description="Helical" evidence="3">
    <location>
        <begin position="328"/>
        <end position="348"/>
    </location>
</feature>
<feature type="topological domain" description="Extracellular" evidence="3">
    <location>
        <begin position="349"/>
        <end position="354"/>
    </location>
</feature>
<feature type="transmembrane region" description="Helical" evidence="3">
    <location>
        <begin position="355"/>
        <end position="375"/>
    </location>
</feature>
<feature type="topological domain" description="Cytoplasmic" evidence="3">
    <location>
        <begin position="376"/>
        <end position="383"/>
    </location>
</feature>
<feature type="transmembrane region" description="Helical" evidence="3">
    <location>
        <begin position="384"/>
        <end position="404"/>
    </location>
</feature>
<feature type="topological domain" description="Extracellular" evidence="3">
    <location>
        <begin position="405"/>
        <end position="411"/>
    </location>
</feature>
<feature type="transmembrane region" description="Helical" evidence="3">
    <location>
        <begin position="412"/>
        <end position="432"/>
    </location>
</feature>
<feature type="topological domain" description="Cytoplasmic" evidence="3">
    <location>
        <begin position="433"/>
        <end position="471"/>
    </location>
</feature>
<feature type="transmembrane region" description="Helical" evidence="3">
    <location>
        <begin position="472"/>
        <end position="492"/>
    </location>
</feature>
<feature type="topological domain" description="Extracellular" evidence="3">
    <location>
        <begin position="493"/>
        <end position="536"/>
    </location>
</feature>
<feature type="region of interest" description="Disordered" evidence="4">
    <location>
        <begin position="515"/>
        <end position="536"/>
    </location>
</feature>
<feature type="modified residue" description="Phosphoserine" evidence="25">
    <location>
        <position position="4"/>
    </location>
</feature>
<feature type="glycosylation site" description="N-linked (GlcNAc...) asparagine" evidence="3">
    <location>
        <position position="81"/>
    </location>
</feature>
<feature type="glycosylation site" description="N-linked (GlcNAc...) asparagine" evidence="3">
    <location>
        <position position="86"/>
    </location>
</feature>
<feature type="sequence conflict" description="In Ref. 2; AAH81777." evidence="22" ref="2">
    <original>Q</original>
    <variation>K</variation>
    <location>
        <position position="515"/>
    </location>
</feature>
<gene>
    <name type="primary">Slc22a8</name>
    <name type="synonym">Oat3</name>
</gene>
<organism>
    <name type="scientific">Rattus norvegicus</name>
    <name type="common">Rat</name>
    <dbReference type="NCBI Taxonomy" id="10116"/>
    <lineage>
        <taxon>Eukaryota</taxon>
        <taxon>Metazoa</taxon>
        <taxon>Chordata</taxon>
        <taxon>Craniata</taxon>
        <taxon>Vertebrata</taxon>
        <taxon>Euteleostomi</taxon>
        <taxon>Mammalia</taxon>
        <taxon>Eutheria</taxon>
        <taxon>Euarchontoglires</taxon>
        <taxon>Glires</taxon>
        <taxon>Rodentia</taxon>
        <taxon>Myomorpha</taxon>
        <taxon>Muroidea</taxon>
        <taxon>Muridae</taxon>
        <taxon>Murinae</taxon>
        <taxon>Rattus</taxon>
    </lineage>
</organism>